<accession>Q0AYB2</accession>
<gene>
    <name evidence="1" type="primary">mutL</name>
    <name type="ordered locus">Swol_0977</name>
</gene>
<protein>
    <recommendedName>
        <fullName evidence="1">DNA mismatch repair protein MutL</fullName>
    </recommendedName>
</protein>
<proteinExistence type="inferred from homology"/>
<sequence>MAIKLLNDNVINKIAAGEVIERPASVVKELLENAIDAASRNIAVKISGAGLDSIEVTDDGEGISMEELPLAFLRHATSKIENEGDLLRIMSMGFRGEALPSIASVSRIDIYSKKEKQEGIHCFIEGGKILDLQYFPGPEGSKIIVSDLFFNTPARKKFLRSPVTEGNNAYELVIKYALARPDIAISFSNEKRQLFRTPGNGSLNDAVIAIFGRDFLEPLIPVKWEGLSLSISGLISPPGVAKMNRKRQLIFVNQRPIRSPLLYRALDEGYRGLLLAREQPLVILQIAVPPDSIDVNVHPQKSEIRFRDEQSIFRSLCGLLRDTLNARDYRLQDNLPQNRSQPFYPAAGRKTAKQKVEEQPVIPFMHNRKADKRVEETGGEPWIPFYPEEQAEGSVSRVYDEFKILGQLWDSYILLEKEQTLNIVDQHAAHERIIYSRLQQFYAASRGEMQMLAFPLLMDLSLRDMELLEKNQEILGELGFDLQQAGPRSIFLRGTPAIIAGQEREVLFEILELLAGGQGINLKNEAIIKMACKKAVKAGTRLDYREMMQIIQELFITDDYKNCPHGRPTIIAWKQADLERMFKR</sequence>
<evidence type="ECO:0000255" key="1">
    <source>
        <dbReference type="HAMAP-Rule" id="MF_00149"/>
    </source>
</evidence>
<comment type="function">
    <text evidence="1">This protein is involved in the repair of mismatches in DNA. It is required for dam-dependent methyl-directed DNA mismatch repair. May act as a 'molecular matchmaker', a protein that promotes the formation of a stable complex between two or more DNA-binding proteins in an ATP-dependent manner without itself being part of a final effector complex.</text>
</comment>
<comment type="similarity">
    <text evidence="1">Belongs to the DNA mismatch repair MutL/HexB family.</text>
</comment>
<dbReference type="EMBL" id="CP000448">
    <property type="protein sequence ID" value="ABI68292.1"/>
    <property type="molecule type" value="Genomic_DNA"/>
</dbReference>
<dbReference type="RefSeq" id="WP_011640397.1">
    <property type="nucleotide sequence ID" value="NC_008346.1"/>
</dbReference>
<dbReference type="SMR" id="Q0AYB2"/>
<dbReference type="STRING" id="335541.Swol_0977"/>
<dbReference type="KEGG" id="swo:Swol_0977"/>
<dbReference type="eggNOG" id="COG0323">
    <property type="taxonomic scope" value="Bacteria"/>
</dbReference>
<dbReference type="HOGENOM" id="CLU_004131_4_1_9"/>
<dbReference type="OrthoDB" id="9763467at2"/>
<dbReference type="Proteomes" id="UP000001968">
    <property type="component" value="Chromosome"/>
</dbReference>
<dbReference type="GO" id="GO:0032300">
    <property type="term" value="C:mismatch repair complex"/>
    <property type="evidence" value="ECO:0007669"/>
    <property type="project" value="InterPro"/>
</dbReference>
<dbReference type="GO" id="GO:0005524">
    <property type="term" value="F:ATP binding"/>
    <property type="evidence" value="ECO:0007669"/>
    <property type="project" value="InterPro"/>
</dbReference>
<dbReference type="GO" id="GO:0016887">
    <property type="term" value="F:ATP hydrolysis activity"/>
    <property type="evidence" value="ECO:0007669"/>
    <property type="project" value="InterPro"/>
</dbReference>
<dbReference type="GO" id="GO:0140664">
    <property type="term" value="F:ATP-dependent DNA damage sensor activity"/>
    <property type="evidence" value="ECO:0007669"/>
    <property type="project" value="InterPro"/>
</dbReference>
<dbReference type="GO" id="GO:0030983">
    <property type="term" value="F:mismatched DNA binding"/>
    <property type="evidence" value="ECO:0007669"/>
    <property type="project" value="InterPro"/>
</dbReference>
<dbReference type="GO" id="GO:0006298">
    <property type="term" value="P:mismatch repair"/>
    <property type="evidence" value="ECO:0007669"/>
    <property type="project" value="UniProtKB-UniRule"/>
</dbReference>
<dbReference type="CDD" id="cd16926">
    <property type="entry name" value="HATPase_MutL-MLH-PMS-like"/>
    <property type="match status" value="1"/>
</dbReference>
<dbReference type="CDD" id="cd00782">
    <property type="entry name" value="MutL_Trans"/>
    <property type="match status" value="1"/>
</dbReference>
<dbReference type="FunFam" id="3.30.565.10:FF:000003">
    <property type="entry name" value="DNA mismatch repair endonuclease MutL"/>
    <property type="match status" value="1"/>
</dbReference>
<dbReference type="Gene3D" id="3.30.230.10">
    <property type="match status" value="1"/>
</dbReference>
<dbReference type="Gene3D" id="3.30.565.10">
    <property type="entry name" value="Histidine kinase-like ATPase, C-terminal domain"/>
    <property type="match status" value="1"/>
</dbReference>
<dbReference type="Gene3D" id="3.30.1540.20">
    <property type="entry name" value="MutL, C-terminal domain, dimerisation subdomain"/>
    <property type="match status" value="1"/>
</dbReference>
<dbReference type="Gene3D" id="3.30.1370.100">
    <property type="entry name" value="MutL, C-terminal domain, regulatory subdomain"/>
    <property type="match status" value="1"/>
</dbReference>
<dbReference type="HAMAP" id="MF_00149">
    <property type="entry name" value="DNA_mis_repair"/>
    <property type="match status" value="1"/>
</dbReference>
<dbReference type="InterPro" id="IPR014762">
    <property type="entry name" value="DNA_mismatch_repair_CS"/>
</dbReference>
<dbReference type="InterPro" id="IPR020667">
    <property type="entry name" value="DNA_mismatch_repair_MutL"/>
</dbReference>
<dbReference type="InterPro" id="IPR013507">
    <property type="entry name" value="DNA_mismatch_S5_2-like"/>
</dbReference>
<dbReference type="InterPro" id="IPR036890">
    <property type="entry name" value="HATPase_C_sf"/>
</dbReference>
<dbReference type="InterPro" id="IPR002099">
    <property type="entry name" value="MutL/Mlh/PMS"/>
</dbReference>
<dbReference type="InterPro" id="IPR038973">
    <property type="entry name" value="MutL/Mlh/Pms-like"/>
</dbReference>
<dbReference type="InterPro" id="IPR014790">
    <property type="entry name" value="MutL_C"/>
</dbReference>
<dbReference type="InterPro" id="IPR042120">
    <property type="entry name" value="MutL_C_dimsub"/>
</dbReference>
<dbReference type="InterPro" id="IPR042121">
    <property type="entry name" value="MutL_C_regsub"/>
</dbReference>
<dbReference type="InterPro" id="IPR037198">
    <property type="entry name" value="MutL_C_sf"/>
</dbReference>
<dbReference type="InterPro" id="IPR020568">
    <property type="entry name" value="Ribosomal_Su5_D2-typ_SF"/>
</dbReference>
<dbReference type="InterPro" id="IPR014721">
    <property type="entry name" value="Ribsml_uS5_D2-typ_fold_subgr"/>
</dbReference>
<dbReference type="NCBIfam" id="TIGR00585">
    <property type="entry name" value="mutl"/>
    <property type="match status" value="1"/>
</dbReference>
<dbReference type="PANTHER" id="PTHR10073">
    <property type="entry name" value="DNA MISMATCH REPAIR PROTEIN MLH, PMS, MUTL"/>
    <property type="match status" value="1"/>
</dbReference>
<dbReference type="PANTHER" id="PTHR10073:SF12">
    <property type="entry name" value="DNA MISMATCH REPAIR PROTEIN MLH1"/>
    <property type="match status" value="1"/>
</dbReference>
<dbReference type="Pfam" id="PF01119">
    <property type="entry name" value="DNA_mis_repair"/>
    <property type="match status" value="1"/>
</dbReference>
<dbReference type="Pfam" id="PF13589">
    <property type="entry name" value="HATPase_c_3"/>
    <property type="match status" value="1"/>
</dbReference>
<dbReference type="Pfam" id="PF08676">
    <property type="entry name" value="MutL_C"/>
    <property type="match status" value="1"/>
</dbReference>
<dbReference type="SMART" id="SM01340">
    <property type="entry name" value="DNA_mis_repair"/>
    <property type="match status" value="1"/>
</dbReference>
<dbReference type="SMART" id="SM00853">
    <property type="entry name" value="MutL_C"/>
    <property type="match status" value="1"/>
</dbReference>
<dbReference type="SUPFAM" id="SSF55874">
    <property type="entry name" value="ATPase domain of HSP90 chaperone/DNA topoisomerase II/histidine kinase"/>
    <property type="match status" value="1"/>
</dbReference>
<dbReference type="SUPFAM" id="SSF118116">
    <property type="entry name" value="DNA mismatch repair protein MutL"/>
    <property type="match status" value="1"/>
</dbReference>
<dbReference type="SUPFAM" id="SSF54211">
    <property type="entry name" value="Ribosomal protein S5 domain 2-like"/>
    <property type="match status" value="1"/>
</dbReference>
<dbReference type="PROSITE" id="PS00058">
    <property type="entry name" value="DNA_MISMATCH_REPAIR_1"/>
    <property type="match status" value="1"/>
</dbReference>
<organism>
    <name type="scientific">Syntrophomonas wolfei subsp. wolfei (strain DSM 2245B / Goettingen)</name>
    <dbReference type="NCBI Taxonomy" id="335541"/>
    <lineage>
        <taxon>Bacteria</taxon>
        <taxon>Bacillati</taxon>
        <taxon>Bacillota</taxon>
        <taxon>Clostridia</taxon>
        <taxon>Eubacteriales</taxon>
        <taxon>Syntrophomonadaceae</taxon>
        <taxon>Syntrophomonas</taxon>
    </lineage>
</organism>
<name>MUTL_SYNWW</name>
<reference key="1">
    <citation type="journal article" date="2010" name="Environ. Microbiol.">
        <title>The genome of Syntrophomonas wolfei: new insights into syntrophic metabolism and biohydrogen production.</title>
        <authorList>
            <person name="Sieber J.R."/>
            <person name="Sims D.R."/>
            <person name="Han C."/>
            <person name="Kim E."/>
            <person name="Lykidis A."/>
            <person name="Lapidus A.L."/>
            <person name="McDonnald E."/>
            <person name="Rohlin L."/>
            <person name="Culley D.E."/>
            <person name="Gunsalus R."/>
            <person name="McInerney M.J."/>
        </authorList>
    </citation>
    <scope>NUCLEOTIDE SEQUENCE [LARGE SCALE GENOMIC DNA]</scope>
    <source>
        <strain>DSM 2245B / Goettingen</strain>
    </source>
</reference>
<keyword id="KW-0227">DNA damage</keyword>
<keyword id="KW-0234">DNA repair</keyword>
<keyword id="KW-1185">Reference proteome</keyword>
<feature type="chain" id="PRO_1000071511" description="DNA mismatch repair protein MutL">
    <location>
        <begin position="1"/>
        <end position="584"/>
    </location>
</feature>